<gene>
    <name evidence="1" type="primary">cmk</name>
    <name type="ordered locus">SARI_01983</name>
</gene>
<comment type="catalytic activity">
    <reaction evidence="1">
        <text>CMP + ATP = CDP + ADP</text>
        <dbReference type="Rhea" id="RHEA:11600"/>
        <dbReference type="ChEBI" id="CHEBI:30616"/>
        <dbReference type="ChEBI" id="CHEBI:58069"/>
        <dbReference type="ChEBI" id="CHEBI:60377"/>
        <dbReference type="ChEBI" id="CHEBI:456216"/>
        <dbReference type="EC" id="2.7.4.25"/>
    </reaction>
</comment>
<comment type="catalytic activity">
    <reaction evidence="1">
        <text>dCMP + ATP = dCDP + ADP</text>
        <dbReference type="Rhea" id="RHEA:25094"/>
        <dbReference type="ChEBI" id="CHEBI:30616"/>
        <dbReference type="ChEBI" id="CHEBI:57566"/>
        <dbReference type="ChEBI" id="CHEBI:58593"/>
        <dbReference type="ChEBI" id="CHEBI:456216"/>
        <dbReference type="EC" id="2.7.4.25"/>
    </reaction>
</comment>
<comment type="subcellular location">
    <subcellularLocation>
        <location evidence="1">Cytoplasm</location>
    </subcellularLocation>
</comment>
<comment type="similarity">
    <text evidence="1">Belongs to the cytidylate kinase family. Type 1 subfamily.</text>
</comment>
<sequence length="227" mass="24693">MTAIAPVITIDGPSGAGKGTLCKAMAEALQWHLLDSGAIYRVLALAALHHHVGLASEDALVPLASHLDVRFVSTDGNLEVILEGEDVSGEIRTQEVANAASQVAAFPRVREALLRRQRAFREAPGLIADGRDMGTVVFPDAPVKIFLDASSEERANRRMLQLQEKGFSVNFERLLAEIKERDDRDRNRAVAPLVPAADALVLDSTRLSIEQVIEKALQYARQKLALA</sequence>
<reference key="1">
    <citation type="submission" date="2007-11" db="EMBL/GenBank/DDBJ databases">
        <authorList>
            <consortium name="The Salmonella enterica serovar Arizonae Genome Sequencing Project"/>
            <person name="McClelland M."/>
            <person name="Sanderson E.K."/>
            <person name="Porwollik S."/>
            <person name="Spieth J."/>
            <person name="Clifton W.S."/>
            <person name="Fulton R."/>
            <person name="Chunyan W."/>
            <person name="Wollam A."/>
            <person name="Shah N."/>
            <person name="Pepin K."/>
            <person name="Bhonagiri V."/>
            <person name="Nash W."/>
            <person name="Johnson M."/>
            <person name="Thiruvilangam P."/>
            <person name="Wilson R."/>
        </authorList>
    </citation>
    <scope>NUCLEOTIDE SEQUENCE [LARGE SCALE GENOMIC DNA]</scope>
    <source>
        <strain>ATCC BAA-731 / CDC346-86 / RSK2980</strain>
    </source>
</reference>
<proteinExistence type="inferred from homology"/>
<feature type="chain" id="PRO_1000078347" description="Cytidylate kinase">
    <location>
        <begin position="1"/>
        <end position="227"/>
    </location>
</feature>
<feature type="binding site" evidence="1">
    <location>
        <begin position="12"/>
        <end position="20"/>
    </location>
    <ligand>
        <name>ATP</name>
        <dbReference type="ChEBI" id="CHEBI:30616"/>
    </ligand>
</feature>
<accession>A9MHX2</accession>
<protein>
    <recommendedName>
        <fullName evidence="1">Cytidylate kinase</fullName>
        <shortName evidence="1">CK</shortName>
        <ecNumber evidence="1">2.7.4.25</ecNumber>
    </recommendedName>
    <alternativeName>
        <fullName evidence="1">Cytidine monophosphate kinase</fullName>
        <shortName evidence="1">CMP kinase</shortName>
    </alternativeName>
</protein>
<keyword id="KW-0067">ATP-binding</keyword>
<keyword id="KW-0963">Cytoplasm</keyword>
<keyword id="KW-0418">Kinase</keyword>
<keyword id="KW-0547">Nucleotide-binding</keyword>
<keyword id="KW-1185">Reference proteome</keyword>
<keyword id="KW-0808">Transferase</keyword>
<dbReference type="EC" id="2.7.4.25" evidence="1"/>
<dbReference type="EMBL" id="CP000880">
    <property type="protein sequence ID" value="ABX21863.1"/>
    <property type="molecule type" value="Genomic_DNA"/>
</dbReference>
<dbReference type="SMR" id="A9MHX2"/>
<dbReference type="STRING" id="41514.SARI_01983"/>
<dbReference type="KEGG" id="ses:SARI_01983"/>
<dbReference type="HOGENOM" id="CLU_079959_0_2_6"/>
<dbReference type="Proteomes" id="UP000002084">
    <property type="component" value="Chromosome"/>
</dbReference>
<dbReference type="GO" id="GO:0005829">
    <property type="term" value="C:cytosol"/>
    <property type="evidence" value="ECO:0007669"/>
    <property type="project" value="TreeGrafter"/>
</dbReference>
<dbReference type="GO" id="GO:0005524">
    <property type="term" value="F:ATP binding"/>
    <property type="evidence" value="ECO:0007669"/>
    <property type="project" value="UniProtKB-UniRule"/>
</dbReference>
<dbReference type="GO" id="GO:0036430">
    <property type="term" value="F:CMP kinase activity"/>
    <property type="evidence" value="ECO:0007669"/>
    <property type="project" value="RHEA"/>
</dbReference>
<dbReference type="GO" id="GO:0036431">
    <property type="term" value="F:dCMP kinase activity"/>
    <property type="evidence" value="ECO:0007669"/>
    <property type="project" value="RHEA"/>
</dbReference>
<dbReference type="GO" id="GO:0015949">
    <property type="term" value="P:nucleobase-containing small molecule interconversion"/>
    <property type="evidence" value="ECO:0007669"/>
    <property type="project" value="TreeGrafter"/>
</dbReference>
<dbReference type="GO" id="GO:0006220">
    <property type="term" value="P:pyrimidine nucleotide metabolic process"/>
    <property type="evidence" value="ECO:0007669"/>
    <property type="project" value="UniProtKB-UniRule"/>
</dbReference>
<dbReference type="CDD" id="cd02020">
    <property type="entry name" value="CMPK"/>
    <property type="match status" value="1"/>
</dbReference>
<dbReference type="FunFam" id="3.40.50.300:FF:000262">
    <property type="entry name" value="Cytidylate kinase"/>
    <property type="match status" value="1"/>
</dbReference>
<dbReference type="Gene3D" id="3.40.50.300">
    <property type="entry name" value="P-loop containing nucleotide triphosphate hydrolases"/>
    <property type="match status" value="1"/>
</dbReference>
<dbReference type="HAMAP" id="MF_00238">
    <property type="entry name" value="Cytidyl_kinase_type1"/>
    <property type="match status" value="1"/>
</dbReference>
<dbReference type="InterPro" id="IPR003136">
    <property type="entry name" value="Cytidylate_kin"/>
</dbReference>
<dbReference type="InterPro" id="IPR011994">
    <property type="entry name" value="Cytidylate_kinase_dom"/>
</dbReference>
<dbReference type="InterPro" id="IPR027417">
    <property type="entry name" value="P-loop_NTPase"/>
</dbReference>
<dbReference type="NCBIfam" id="TIGR00017">
    <property type="entry name" value="cmk"/>
    <property type="match status" value="1"/>
</dbReference>
<dbReference type="PANTHER" id="PTHR21299:SF2">
    <property type="entry name" value="CYTIDYLATE KINASE"/>
    <property type="match status" value="1"/>
</dbReference>
<dbReference type="PANTHER" id="PTHR21299">
    <property type="entry name" value="CYTIDYLATE KINASE/PANTOATE-BETA-ALANINE LIGASE"/>
    <property type="match status" value="1"/>
</dbReference>
<dbReference type="Pfam" id="PF02224">
    <property type="entry name" value="Cytidylate_kin"/>
    <property type="match status" value="1"/>
</dbReference>
<dbReference type="SUPFAM" id="SSF52540">
    <property type="entry name" value="P-loop containing nucleoside triphosphate hydrolases"/>
    <property type="match status" value="1"/>
</dbReference>
<name>KCY_SALAR</name>
<evidence type="ECO:0000255" key="1">
    <source>
        <dbReference type="HAMAP-Rule" id="MF_00238"/>
    </source>
</evidence>
<organism>
    <name type="scientific">Salmonella arizonae (strain ATCC BAA-731 / CDC346-86 / RSK2980)</name>
    <dbReference type="NCBI Taxonomy" id="41514"/>
    <lineage>
        <taxon>Bacteria</taxon>
        <taxon>Pseudomonadati</taxon>
        <taxon>Pseudomonadota</taxon>
        <taxon>Gammaproteobacteria</taxon>
        <taxon>Enterobacterales</taxon>
        <taxon>Enterobacteriaceae</taxon>
        <taxon>Salmonella</taxon>
    </lineage>
</organism>